<gene>
    <name type="ordered locus">SAS0690</name>
</gene>
<dbReference type="EC" id="3.1.3.-"/>
<dbReference type="EMBL" id="BX571857">
    <property type="protein sequence ID" value="CAG42466.1"/>
    <property type="molecule type" value="Genomic_DNA"/>
</dbReference>
<dbReference type="RefSeq" id="WP_000197271.1">
    <property type="nucleotide sequence ID" value="NC_002953.3"/>
</dbReference>
<dbReference type="SMR" id="Q6GBA5"/>
<dbReference type="KEGG" id="sas:SAS0690"/>
<dbReference type="HOGENOM" id="CLU_111510_0_0_9"/>
<dbReference type="GO" id="GO:0008253">
    <property type="term" value="F:5'-nucleotidase activity"/>
    <property type="evidence" value="ECO:0007669"/>
    <property type="project" value="InterPro"/>
</dbReference>
<dbReference type="GO" id="GO:0046872">
    <property type="term" value="F:metal ion binding"/>
    <property type="evidence" value="ECO:0007669"/>
    <property type="project" value="UniProtKB-KW"/>
</dbReference>
<dbReference type="GO" id="GO:0009223">
    <property type="term" value="P:pyrimidine deoxyribonucleotide catabolic process"/>
    <property type="evidence" value="ECO:0007669"/>
    <property type="project" value="TreeGrafter"/>
</dbReference>
<dbReference type="Gene3D" id="1.10.40.40">
    <property type="entry name" value="Deoxyribonucleotidase, domain 2"/>
    <property type="match status" value="1"/>
</dbReference>
<dbReference type="Gene3D" id="3.40.50.1000">
    <property type="entry name" value="HAD superfamily/HAD-like"/>
    <property type="match status" value="1"/>
</dbReference>
<dbReference type="InterPro" id="IPR010708">
    <property type="entry name" value="5'(3')-deoxyribonucleotidase"/>
</dbReference>
<dbReference type="InterPro" id="IPR036412">
    <property type="entry name" value="HAD-like_sf"/>
</dbReference>
<dbReference type="InterPro" id="IPR023214">
    <property type="entry name" value="HAD_sf"/>
</dbReference>
<dbReference type="PANTHER" id="PTHR16504">
    <property type="entry name" value="5'(3')-DEOXYRIBONUCLEOTIDASE"/>
    <property type="match status" value="1"/>
</dbReference>
<dbReference type="PANTHER" id="PTHR16504:SF4">
    <property type="entry name" value="5'(3')-DEOXYRIBONUCLEOTIDASE"/>
    <property type="match status" value="1"/>
</dbReference>
<dbReference type="Pfam" id="PF06941">
    <property type="entry name" value="NT5C"/>
    <property type="match status" value="1"/>
</dbReference>
<dbReference type="SFLD" id="SFLDG01146">
    <property type="entry name" value="C1.2.2"/>
    <property type="match status" value="1"/>
</dbReference>
<dbReference type="SFLD" id="SFLDS00003">
    <property type="entry name" value="Haloacid_Dehalogenase"/>
    <property type="match status" value="1"/>
</dbReference>
<dbReference type="SUPFAM" id="SSF56784">
    <property type="entry name" value="HAD-like"/>
    <property type="match status" value="1"/>
</dbReference>
<protein>
    <recommendedName>
        <fullName>Putative 5'(3')-deoxyribonucleotidase</fullName>
        <ecNumber>3.1.3.-</ecNumber>
    </recommendedName>
</protein>
<name>53DR_STAAS</name>
<feature type="chain" id="PRO_0000164384" description="Putative 5'(3')-deoxyribonucleotidase">
    <location>
        <begin position="1"/>
        <end position="180"/>
    </location>
</feature>
<feature type="active site" description="Nucleophile" evidence="3">
    <location>
        <position position="9"/>
    </location>
</feature>
<feature type="active site" description="Proton donor" evidence="3">
    <location>
        <position position="11"/>
    </location>
</feature>
<feature type="binding site" evidence="1">
    <location>
        <position position="9"/>
    </location>
    <ligand>
        <name>Mg(2+)</name>
        <dbReference type="ChEBI" id="CHEBI:18420"/>
    </ligand>
</feature>
<feature type="binding site" evidence="1">
    <location>
        <position position="11"/>
    </location>
    <ligand>
        <name>Mg(2+)</name>
        <dbReference type="ChEBI" id="CHEBI:18420"/>
    </ligand>
</feature>
<feature type="binding site" evidence="1">
    <location>
        <position position="135"/>
    </location>
    <ligand>
        <name>Mg(2+)</name>
        <dbReference type="ChEBI" id="CHEBI:18420"/>
    </ligand>
</feature>
<accession>Q6GBA5</accession>
<sequence length="180" mass="20987">MTRKSIAIDMDEVLADTLGEIIDAVNFRADLGIKMEALNGQKLKHVIPEHDGLITEVLREPGFFRHLKVMPYAQEVVKKLTEHYDVYIATAAMDVPTSFSDKYEWLLEFFPFLDPQHFVFCGRKNIVKADYLIDDNPRQLEIFTGTPIMFTAVHNINDDRFERVNSWKDVEQYFLDNIEK</sequence>
<keyword id="KW-0378">Hydrolase</keyword>
<keyword id="KW-0460">Magnesium</keyword>
<keyword id="KW-0479">Metal-binding</keyword>
<organism>
    <name type="scientific">Staphylococcus aureus (strain MSSA476)</name>
    <dbReference type="NCBI Taxonomy" id="282459"/>
    <lineage>
        <taxon>Bacteria</taxon>
        <taxon>Bacillati</taxon>
        <taxon>Bacillota</taxon>
        <taxon>Bacilli</taxon>
        <taxon>Bacillales</taxon>
        <taxon>Staphylococcaceae</taxon>
        <taxon>Staphylococcus</taxon>
    </lineage>
</organism>
<evidence type="ECO:0000250" key="1">
    <source>
        <dbReference type="UniProtKB" id="Q8CTG7"/>
    </source>
</evidence>
<evidence type="ECO:0000250" key="2">
    <source>
        <dbReference type="UniProtKB" id="Q97JQ5"/>
    </source>
</evidence>
<evidence type="ECO:0000305" key="3"/>
<proteinExistence type="inferred from homology"/>
<reference key="1">
    <citation type="journal article" date="2004" name="Proc. Natl. Acad. Sci. U.S.A.">
        <title>Complete genomes of two clinical Staphylococcus aureus strains: evidence for the rapid evolution of virulence and drug resistance.</title>
        <authorList>
            <person name="Holden M.T.G."/>
            <person name="Feil E.J."/>
            <person name="Lindsay J.A."/>
            <person name="Peacock S.J."/>
            <person name="Day N.P.J."/>
            <person name="Enright M.C."/>
            <person name="Foster T.J."/>
            <person name="Moore C.E."/>
            <person name="Hurst L."/>
            <person name="Atkin R."/>
            <person name="Barron A."/>
            <person name="Bason N."/>
            <person name="Bentley S.D."/>
            <person name="Chillingworth C."/>
            <person name="Chillingworth T."/>
            <person name="Churcher C."/>
            <person name="Clark L."/>
            <person name="Corton C."/>
            <person name="Cronin A."/>
            <person name="Doggett J."/>
            <person name="Dowd L."/>
            <person name="Feltwell T."/>
            <person name="Hance Z."/>
            <person name="Harris B."/>
            <person name="Hauser H."/>
            <person name="Holroyd S."/>
            <person name="Jagels K."/>
            <person name="James K.D."/>
            <person name="Lennard N."/>
            <person name="Line A."/>
            <person name="Mayes R."/>
            <person name="Moule S."/>
            <person name="Mungall K."/>
            <person name="Ormond D."/>
            <person name="Quail M.A."/>
            <person name="Rabbinowitsch E."/>
            <person name="Rutherford K.M."/>
            <person name="Sanders M."/>
            <person name="Sharp S."/>
            <person name="Simmonds M."/>
            <person name="Stevens K."/>
            <person name="Whitehead S."/>
            <person name="Barrell B.G."/>
            <person name="Spratt B.G."/>
            <person name="Parkhill J."/>
        </authorList>
    </citation>
    <scope>NUCLEOTIDE SEQUENCE [LARGE SCALE GENOMIC DNA]</scope>
    <source>
        <strain>MSSA476</strain>
    </source>
</reference>
<comment type="function">
    <text evidence="3">Dephosphorylates the 5' and 2'(3')-phosphates of deoxyribonucleotides.</text>
</comment>
<comment type="cofactor">
    <cofactor evidence="2">
        <name>Mg(2+)</name>
        <dbReference type="ChEBI" id="CHEBI:18420"/>
    </cofactor>
</comment>
<comment type="similarity">
    <text evidence="3">Belongs to the 5'(3')-deoxyribonucleotidase family.</text>
</comment>